<proteinExistence type="inferred from homology"/>
<accession>Q6Q888</accession>
<keyword id="KW-0521">NADP</keyword>
<keyword id="KW-0560">Oxidoreductase</keyword>
<keyword id="KW-0843">Virulence</keyword>
<sequence>MAVAVVFGASGISGWGITKALLDAKTQNAFSKIIALTNRSLSLAESGLPDDDRLQLHSGIDLQANVDDVIAKLRERIPSIGNVTHVFYTAFSTSHTDNQLMMKASNTKMLRTMVEAMETVAPSLSFIAVQTGSNHYGILFAEVLGERFGPVPLKEDLPRLPSPLRDSLMFYAMADEMDELSRGKSWKWCDIRPDMIVGYLPRPNSHSIAESIGYYLAFHAYLTPGEEVPFPGSEAAWNAKFSLTGQGVLGNFNVHLACKNSIENGEAFNIANKPFTTWASLWPLLAGYWGLKGTAPVGHHGIPDAASWVLDNMDRVKGWEEKYSMKPGRLFKIPWRYFHWALNMPFDRYLDLTRCEQTGFQQHEEHKESFETAWKCMQEAKLLPIVDKSSTPP</sequence>
<feature type="chain" id="PRO_0000437717" description="Short chain dehydrogenase sirQ">
    <location>
        <begin position="1"/>
        <end position="393"/>
    </location>
</feature>
<feature type="active site" description="Proton donor" evidence="2">
    <location>
        <position position="233"/>
    </location>
</feature>
<feature type="active site" description="Lowers pKa of active site Tyr" evidence="2">
    <location>
        <position position="259"/>
    </location>
</feature>
<feature type="binding site" evidence="1">
    <location>
        <position position="54"/>
    </location>
    <ligand>
        <name>NADP(+)</name>
        <dbReference type="ChEBI" id="CHEBI:58349"/>
    </ligand>
</feature>
<feature type="binding site" evidence="2">
    <location>
        <position position="286"/>
    </location>
    <ligand>
        <name>NADP(+)</name>
        <dbReference type="ChEBI" id="CHEBI:58349"/>
    </ligand>
</feature>
<comment type="function">
    <text evidence="3 4 5 6 9 10">Short chain dehydrogenase; part of the gene cluster that mediates the biosynthesis of sirodesmin PL, an epipolythiodioxopiperazine (ETP) characterized by a disulfide bridged cyclic dipeptide and that acts as a phytotoxin which is involved in the blackleg didease of canola (PubMed:15387811, PubMed:18272357, PubMed:19762440). SirD catalyzes the O-prenylation of L-tyrosine (L-Tyr) in the presence of dimethylallyl diphosphate (DMAPP) to yield 4-O-dimethylallyl-L-Tyr, and therefore represents probably the first pathway-specific enzyme in the biosynthesis of sirodesmin PL (PubMed:19762440, PubMed:21038099, PubMed:24083562). 4-O-dimethylallyl-L-Tyr, then undergoes condensation with L-Ser in a reaction catalyzed by the non-ribosomal peptide synthase sirP to form the diketopiperazine (DKP) backbone (PubMed:18272357). Further bishydroxylation of the DKP performed by the cytochrome P450 monooxygenase sirC leads to the production of the intermediate phomamide (PubMed:27390873). This step is essential to form the reactive thiol group required for toxicity of sirodesmin PL (PubMed:27390873). The next steps of sirodesmin biosynthesis are not well understood yet, but some predictions could be made from intermediate compounds identification (PubMed:18272357). Phomamide is converted into phomalizarine via oxidation, probably by sirT (PubMed:18272357). Further oxidation, methylation (by sirM or sirN) and reduction steps convert phomalizarine to deacetyl sirodesmin (PubMed:18272357). Finally, acetyltransferase sirH probably acetylates deacetyl sirodesmin to produce sirodesmin PL (PubMed:18272357).</text>
</comment>
<comment type="pathway">
    <text evidence="9">Mycotoxin biosynthesis.</text>
</comment>
<comment type="similarity">
    <text evidence="8">Belongs to the short-chain dehydrogenases/reductases (SDR) family. Highly divergent.</text>
</comment>
<comment type="caution">
    <text evidence="8">It is uncertain whether sirQ is an active short chain dehydrogenase since it lacks the conserved active sites.</text>
</comment>
<dbReference type="EC" id="1.-.-.-" evidence="8"/>
<dbReference type="EMBL" id="AY553235">
    <property type="protein sequence ID" value="AAS92540.1"/>
    <property type="molecule type" value="Genomic_DNA"/>
</dbReference>
<dbReference type="RefSeq" id="XP_003842427.1">
    <property type="nucleotide sequence ID" value="XM_003842379.1"/>
</dbReference>
<dbReference type="SMR" id="Q6Q888"/>
<dbReference type="OMA" id="LMDFDRP"/>
<dbReference type="GO" id="GO:0016491">
    <property type="term" value="F:oxidoreductase activity"/>
    <property type="evidence" value="ECO:0007669"/>
    <property type="project" value="UniProtKB-KW"/>
</dbReference>
<dbReference type="CDD" id="cd08948">
    <property type="entry name" value="5beta-POR_like_SDR_a"/>
    <property type="match status" value="1"/>
</dbReference>
<dbReference type="Gene3D" id="3.40.50.720">
    <property type="entry name" value="NAD(P)-binding Rossmann-like Domain"/>
    <property type="match status" value="1"/>
</dbReference>
<dbReference type="InterPro" id="IPR036291">
    <property type="entry name" value="NAD(P)-bd_dom_sf"/>
</dbReference>
<dbReference type="InterPro" id="IPR055222">
    <property type="entry name" value="PRISE-like_Rossmann-fold"/>
</dbReference>
<dbReference type="PANTHER" id="PTHR32487">
    <property type="entry name" value="3-OXO-DELTA(4,5)-STEROID 5-BETA-REDUCTASE"/>
    <property type="match status" value="1"/>
</dbReference>
<dbReference type="PANTHER" id="PTHR32487:SF8">
    <property type="entry name" value="NAD-DEPENDENT EPIMERASE_DEHYDRATASE DOMAIN-CONTAINING PROTEIN"/>
    <property type="match status" value="1"/>
</dbReference>
<dbReference type="Pfam" id="PF22917">
    <property type="entry name" value="PRISE"/>
    <property type="match status" value="1"/>
</dbReference>
<dbReference type="SUPFAM" id="SSF51735">
    <property type="entry name" value="NAD(P)-binding Rossmann-fold domains"/>
    <property type="match status" value="1"/>
</dbReference>
<gene>
    <name evidence="7" type="primary">sirQ</name>
</gene>
<reference key="1">
    <citation type="journal article" date="2004" name="Mol. Microbiol.">
        <title>The sirodesmin biosynthetic gene cluster of the plant pathogenic fungus Leptosphaeria maculans.</title>
        <authorList>
            <person name="Gardiner D.M."/>
            <person name="Cozijnsen A.J."/>
            <person name="Wilson L.M."/>
            <person name="Pedras M.S."/>
            <person name="Howlett B.J."/>
        </authorList>
    </citation>
    <scope>NUCLEOTIDE SEQUENCE [GENOMIC DNA]</scope>
    <scope>FUNCTION</scope>
</reference>
<reference key="2">
    <citation type="journal article" date="2008" name="Mycol. Res.">
        <title>Biosynthetic gene clusters for epipolythiodioxopiperazines in filamentous fungi.</title>
        <authorList>
            <person name="Fox E.M."/>
            <person name="Howlett B.J."/>
        </authorList>
    </citation>
    <scope>FUNCTION</scope>
</reference>
<reference key="3">
    <citation type="journal article" date="2010" name="Microbiology">
        <title>A tyrosine O-prenyltransferase catalyses the first pathway-specific step in the biosynthesis of sirodesmin PL.</title>
        <authorList>
            <person name="Kremer A."/>
            <person name="Li S.M."/>
        </authorList>
    </citation>
    <scope>FUNCTION</scope>
</reference>
<reference key="4">
    <citation type="journal article" date="2011" name="Appl. Microbiol. Biotechnol.">
        <title>The tyrosine O-prenyltransferase SirD catalyzes O-, N-, and C-prenylations.</title>
        <authorList>
            <person name="Zou H.X."/>
            <person name="Xie X."/>
            <person name="Zheng X.D."/>
            <person name="Li S.M."/>
        </authorList>
    </citation>
    <scope>FUNCTION</scope>
</reference>
<reference key="5">
    <citation type="journal article" date="2013" name="ACS Chem. Biol.">
        <title>Tyrosine O-prenyltransferase SirD catalyzes S-, C-, and N-prenylations on tyrosine and tryptophan derivatives.</title>
        <authorList>
            <person name="Rudolf J.D."/>
            <person name="Poulter C.D."/>
        </authorList>
    </citation>
    <scope>FUNCTION</scope>
</reference>
<reference key="6">
    <citation type="journal article" date="2016" name="PLoS ONE">
        <title>The epipolythiodiketopiperazine gene cluster in Claviceps purpurea: dysfunctional cytochrome P450 enzyme prevents formation of the previously unknown clapurines.</title>
        <authorList>
            <person name="Dopstadt J."/>
            <person name="Neubauer L."/>
            <person name="Tudzynski P."/>
            <person name="Humpf H.U."/>
        </authorList>
    </citation>
    <scope>FUNCTION</scope>
</reference>
<name>SIRQ_LEPMC</name>
<protein>
    <recommendedName>
        <fullName evidence="8">Short chain dehydrogenase sirQ</fullName>
        <ecNumber evidence="8">1.-.-.-</ecNumber>
    </recommendedName>
    <alternativeName>
        <fullName evidence="7">Sirodesmin biosynthesis protein Q</fullName>
    </alternativeName>
</protein>
<evidence type="ECO:0000250" key="1">
    <source>
        <dbReference type="UniProtKB" id="L0E2Z4"/>
    </source>
</evidence>
<evidence type="ECO:0000250" key="2">
    <source>
        <dbReference type="UniProtKB" id="O93868"/>
    </source>
</evidence>
<evidence type="ECO:0000269" key="3">
    <source>
    </source>
</evidence>
<evidence type="ECO:0000269" key="4">
    <source>
    </source>
</evidence>
<evidence type="ECO:0000269" key="5">
    <source>
    </source>
</evidence>
<evidence type="ECO:0000269" key="6">
    <source>
    </source>
</evidence>
<evidence type="ECO:0000303" key="7">
    <source>
    </source>
</evidence>
<evidence type="ECO:0000305" key="8"/>
<evidence type="ECO:0000305" key="9">
    <source>
    </source>
</evidence>
<evidence type="ECO:0000305" key="10">
    <source>
    </source>
</evidence>
<organism>
    <name type="scientific">Leptosphaeria maculans</name>
    <name type="common">Blackleg fungus</name>
    <name type="synonym">Phoma lingam</name>
    <dbReference type="NCBI Taxonomy" id="5022"/>
    <lineage>
        <taxon>Eukaryota</taxon>
        <taxon>Fungi</taxon>
        <taxon>Dikarya</taxon>
        <taxon>Ascomycota</taxon>
        <taxon>Pezizomycotina</taxon>
        <taxon>Dothideomycetes</taxon>
        <taxon>Pleosporomycetidae</taxon>
        <taxon>Pleosporales</taxon>
        <taxon>Pleosporineae</taxon>
        <taxon>Leptosphaeriaceae</taxon>
        <taxon>Plenodomus</taxon>
        <taxon>Plenodomus lingam/Leptosphaeria maculans species complex</taxon>
    </lineage>
</organism>